<name>NPR4_ORYSJ</name>
<reference key="1">
    <citation type="journal article" date="2007" name="Plant Biotechnol. J.">
        <title>Functional analysis of rice NPR1-like genes reveals that OsNPR1/NH1 is the rice orthologue conferring disease resistance with enhanced herbivore susceptibility.</title>
        <authorList>
            <person name="Yuan Y."/>
            <person name="Zhong S."/>
            <person name="Li Q."/>
            <person name="Zhu Z."/>
            <person name="Lou Y."/>
            <person name="Wang L."/>
            <person name="Wang J."/>
            <person name="Wang M."/>
            <person name="Li Q."/>
            <person name="Yang D."/>
            <person name="He Z."/>
        </authorList>
    </citation>
    <scope>NUCLEOTIDE SEQUENCE [GENOMIC DNA / MRNA] (ISOFORM 1)</scope>
</reference>
<reference key="2">
    <citation type="journal article" date="2002" name="Nature">
        <title>The genome sequence and structure of rice chromosome 1.</title>
        <authorList>
            <person name="Sasaki T."/>
            <person name="Matsumoto T."/>
            <person name="Yamamoto K."/>
            <person name="Sakata K."/>
            <person name="Baba T."/>
            <person name="Katayose Y."/>
            <person name="Wu J."/>
            <person name="Niimura Y."/>
            <person name="Cheng Z."/>
            <person name="Nagamura Y."/>
            <person name="Antonio B.A."/>
            <person name="Kanamori H."/>
            <person name="Hosokawa S."/>
            <person name="Masukawa M."/>
            <person name="Arikawa K."/>
            <person name="Chiden Y."/>
            <person name="Hayashi M."/>
            <person name="Okamoto M."/>
            <person name="Ando T."/>
            <person name="Aoki H."/>
            <person name="Arita K."/>
            <person name="Hamada M."/>
            <person name="Harada C."/>
            <person name="Hijishita S."/>
            <person name="Honda M."/>
            <person name="Ichikawa Y."/>
            <person name="Idonuma A."/>
            <person name="Iijima M."/>
            <person name="Ikeda M."/>
            <person name="Ikeno M."/>
            <person name="Ito S."/>
            <person name="Ito T."/>
            <person name="Ito Y."/>
            <person name="Ito Y."/>
            <person name="Iwabuchi A."/>
            <person name="Kamiya K."/>
            <person name="Karasawa W."/>
            <person name="Katagiri S."/>
            <person name="Kikuta A."/>
            <person name="Kobayashi N."/>
            <person name="Kono I."/>
            <person name="Machita K."/>
            <person name="Maehara T."/>
            <person name="Mizuno H."/>
            <person name="Mizubayashi T."/>
            <person name="Mukai Y."/>
            <person name="Nagasaki H."/>
            <person name="Nakashima M."/>
            <person name="Nakama Y."/>
            <person name="Nakamichi Y."/>
            <person name="Nakamura M."/>
            <person name="Namiki N."/>
            <person name="Negishi M."/>
            <person name="Ohta I."/>
            <person name="Ono N."/>
            <person name="Saji S."/>
            <person name="Sakai K."/>
            <person name="Shibata M."/>
            <person name="Shimokawa T."/>
            <person name="Shomura A."/>
            <person name="Song J."/>
            <person name="Takazaki Y."/>
            <person name="Terasawa K."/>
            <person name="Tsuji K."/>
            <person name="Waki K."/>
            <person name="Yamagata H."/>
            <person name="Yamane H."/>
            <person name="Yoshiki S."/>
            <person name="Yoshihara R."/>
            <person name="Yukawa K."/>
            <person name="Zhong H."/>
            <person name="Iwama H."/>
            <person name="Endo T."/>
            <person name="Ito H."/>
            <person name="Hahn J.H."/>
            <person name="Kim H.-I."/>
            <person name="Eun M.-Y."/>
            <person name="Yano M."/>
            <person name="Jiang J."/>
            <person name="Gojobori T."/>
        </authorList>
    </citation>
    <scope>NUCLEOTIDE SEQUENCE [LARGE SCALE GENOMIC DNA]</scope>
    <source>
        <strain>cv. Nipponbare</strain>
    </source>
</reference>
<reference key="3">
    <citation type="journal article" date="2005" name="Nature">
        <title>The map-based sequence of the rice genome.</title>
        <authorList>
            <consortium name="International rice genome sequencing project (IRGSP)"/>
        </authorList>
    </citation>
    <scope>NUCLEOTIDE SEQUENCE [LARGE SCALE GENOMIC DNA]</scope>
    <source>
        <strain>cv. Nipponbare</strain>
    </source>
</reference>
<reference key="4">
    <citation type="journal article" date="2008" name="Nucleic Acids Res.">
        <title>The rice annotation project database (RAP-DB): 2008 update.</title>
        <authorList>
            <consortium name="The rice annotation project (RAP)"/>
        </authorList>
    </citation>
    <scope>GENOME REANNOTATION</scope>
    <source>
        <strain>cv. Nipponbare</strain>
    </source>
</reference>
<reference key="5">
    <citation type="journal article" date="2013" name="Rice">
        <title>Improvement of the Oryza sativa Nipponbare reference genome using next generation sequence and optical map data.</title>
        <authorList>
            <person name="Kawahara Y."/>
            <person name="de la Bastide M."/>
            <person name="Hamilton J.P."/>
            <person name="Kanamori H."/>
            <person name="McCombie W.R."/>
            <person name="Ouyang S."/>
            <person name="Schwartz D.C."/>
            <person name="Tanaka T."/>
            <person name="Wu J."/>
            <person name="Zhou S."/>
            <person name="Childs K.L."/>
            <person name="Davidson R.M."/>
            <person name="Lin H."/>
            <person name="Quesada-Ocampo L."/>
            <person name="Vaillancourt B."/>
            <person name="Sakai H."/>
            <person name="Lee S.S."/>
            <person name="Kim J."/>
            <person name="Numa H."/>
            <person name="Itoh T."/>
            <person name="Buell C.R."/>
            <person name="Matsumoto T."/>
        </authorList>
    </citation>
    <scope>GENOME REANNOTATION</scope>
    <source>
        <strain>cv. Nipponbare</strain>
    </source>
</reference>
<reference key="6">
    <citation type="submission" date="2006-10" db="EMBL/GenBank/DDBJ databases">
        <title>Oryza sativa full length cDNA.</title>
        <authorList>
            <consortium name="The rice full-length cDNA consortium"/>
        </authorList>
    </citation>
    <scope>NUCLEOTIDE SEQUENCE [LARGE SCALE MRNA] (ISOFORM 2)</scope>
    <source>
        <strain>cv. Nipponbare</strain>
    </source>
</reference>
<proteinExistence type="evidence at transcript level"/>
<feature type="chain" id="PRO_0000437006" description="Ankyrin repeat-containing protein NPR4">
    <location>
        <begin position="1"/>
        <end position="583"/>
    </location>
</feature>
<feature type="transmembrane region" description="Helical" evidence="2">
    <location>
        <begin position="414"/>
        <end position="434"/>
    </location>
</feature>
<feature type="transmembrane region" description="Helical" evidence="2">
    <location>
        <begin position="452"/>
        <end position="472"/>
    </location>
</feature>
<feature type="transmembrane region" description="Helical" evidence="2">
    <location>
        <begin position="492"/>
        <end position="512"/>
    </location>
</feature>
<feature type="transmembrane region" description="Helical" evidence="2">
    <location>
        <begin position="518"/>
        <end position="538"/>
    </location>
</feature>
<feature type="repeat" description="ANK 1" evidence="2">
    <location>
        <begin position="68"/>
        <end position="97"/>
    </location>
</feature>
<feature type="repeat" description="ANK 2" evidence="2">
    <location>
        <begin position="119"/>
        <end position="148"/>
    </location>
</feature>
<feature type="repeat" description="ANK 3" evidence="2">
    <location>
        <begin position="154"/>
        <end position="183"/>
    </location>
</feature>
<feature type="repeat" description="ANK 4" evidence="2">
    <location>
        <begin position="188"/>
        <end position="218"/>
    </location>
</feature>
<feature type="repeat" description="ANK 5" evidence="2">
    <location>
        <begin position="223"/>
        <end position="252"/>
    </location>
</feature>
<feature type="repeat" description="ANK 6" evidence="2">
    <location>
        <begin position="257"/>
        <end position="286"/>
    </location>
</feature>
<feature type="repeat" description="ANK 7" evidence="2">
    <location>
        <begin position="291"/>
        <end position="321"/>
    </location>
</feature>
<feature type="splice variant" id="VSP_058478" description="In isoform 2.">
    <original>MVSDRSCIGYLRSVIAGSVDTHTGHECTITNHAA</original>
    <variation>MSLEIHE</variation>
    <location>
        <begin position="1"/>
        <end position="34"/>
    </location>
</feature>
<protein>
    <recommendedName>
        <fullName evidence="4">Ankyrin repeat-containing protein NPR4</fullName>
        <shortName evidence="3">OsNPR4</shortName>
    </recommendedName>
</protein>
<dbReference type="EMBL" id="DQ450953">
    <property type="protein sequence ID" value="ABE11619.1"/>
    <property type="molecule type" value="mRNA"/>
</dbReference>
<dbReference type="EMBL" id="DQ450954">
    <property type="protein sequence ID" value="ABE11620.1"/>
    <property type="molecule type" value="Genomic_DNA"/>
</dbReference>
<dbReference type="EMBL" id="AP003271">
    <property type="protein sequence ID" value="BAD73402.1"/>
    <property type="molecule type" value="Genomic_DNA"/>
</dbReference>
<dbReference type="EMBL" id="AP008207">
    <property type="protein sequence ID" value="BAF06649.2"/>
    <property type="status" value="ALT_SEQ"/>
    <property type="molecule type" value="Genomic_DNA"/>
</dbReference>
<dbReference type="EMBL" id="AP014957">
    <property type="protein sequence ID" value="BAS75114.1"/>
    <property type="molecule type" value="Genomic_DNA"/>
</dbReference>
<dbReference type="EMBL" id="AK243678">
    <property type="status" value="NOT_ANNOTATED_CDS"/>
    <property type="molecule type" value="mRNA"/>
</dbReference>
<dbReference type="RefSeq" id="XP_015622043.1">
    <property type="nucleotide sequence ID" value="XM_015766557.1"/>
</dbReference>
<dbReference type="SMR" id="A2CIR5"/>
<dbReference type="FunCoup" id="A2CIR5">
    <property type="interactions" value="764"/>
</dbReference>
<dbReference type="STRING" id="39947.A2CIR5"/>
<dbReference type="PaxDb" id="39947-A2CIR5"/>
<dbReference type="KEGG" id="dosa:Os01g0837000"/>
<dbReference type="eggNOG" id="KOG0504">
    <property type="taxonomic scope" value="Eukaryota"/>
</dbReference>
<dbReference type="InParanoid" id="A2CIR5"/>
<dbReference type="OMA" id="CEESCEI"/>
<dbReference type="OrthoDB" id="194358at2759"/>
<dbReference type="Proteomes" id="UP000000763">
    <property type="component" value="Chromosome 1"/>
</dbReference>
<dbReference type="Proteomes" id="UP000059680">
    <property type="component" value="Chromosome 1"/>
</dbReference>
<dbReference type="GO" id="GO:0005886">
    <property type="term" value="C:plasma membrane"/>
    <property type="evidence" value="ECO:0000318"/>
    <property type="project" value="GO_Central"/>
</dbReference>
<dbReference type="FunFam" id="1.25.40.20:FF:000245">
    <property type="entry name" value="Ankyrin repeat-containing protein ITN1"/>
    <property type="match status" value="1"/>
</dbReference>
<dbReference type="FunFam" id="1.25.40.20:FF:000327">
    <property type="entry name" value="Ankyrin repeat-containing protein NPR4"/>
    <property type="match status" value="1"/>
</dbReference>
<dbReference type="FunFam" id="1.25.40.20:FF:000390">
    <property type="entry name" value="Ankyrin repeat-containing protein NPR4"/>
    <property type="match status" value="1"/>
</dbReference>
<dbReference type="Gene3D" id="1.25.40.20">
    <property type="entry name" value="Ankyrin repeat-containing domain"/>
    <property type="match status" value="2"/>
</dbReference>
<dbReference type="InterPro" id="IPR002110">
    <property type="entry name" value="Ankyrin_rpt"/>
</dbReference>
<dbReference type="InterPro" id="IPR036770">
    <property type="entry name" value="Ankyrin_rpt-contain_sf"/>
</dbReference>
<dbReference type="InterPro" id="IPR026961">
    <property type="entry name" value="PGG_dom"/>
</dbReference>
<dbReference type="PANTHER" id="PTHR24186:SF42">
    <property type="entry name" value="ANKYRIN REPEAT-CONTAINING PROTEIN NPR4"/>
    <property type="match status" value="1"/>
</dbReference>
<dbReference type="PANTHER" id="PTHR24186">
    <property type="entry name" value="PROTEIN PHOSPHATASE 1 REGULATORY SUBUNIT"/>
    <property type="match status" value="1"/>
</dbReference>
<dbReference type="Pfam" id="PF12796">
    <property type="entry name" value="Ank_2"/>
    <property type="match status" value="3"/>
</dbReference>
<dbReference type="Pfam" id="PF13962">
    <property type="entry name" value="PGG"/>
    <property type="match status" value="1"/>
</dbReference>
<dbReference type="SMART" id="SM00248">
    <property type="entry name" value="ANK"/>
    <property type="match status" value="7"/>
</dbReference>
<dbReference type="SUPFAM" id="SSF48403">
    <property type="entry name" value="Ankyrin repeat"/>
    <property type="match status" value="1"/>
</dbReference>
<dbReference type="PROSITE" id="PS50297">
    <property type="entry name" value="ANK_REP_REGION"/>
    <property type="match status" value="1"/>
</dbReference>
<dbReference type="PROSITE" id="PS50088">
    <property type="entry name" value="ANK_REPEAT"/>
    <property type="match status" value="3"/>
</dbReference>
<sequence length="583" mass="63291">MVSDRSCIGYLRSVIAGSVDTHTGHECTITNHAAEEGGGTAAAAAVKVMTVSGSGKRGRYVRQVTGRHNDTDLHVAARGGDAGALRRALDEAAAAVATGEGREALEEVRRAVAAEPNEAGETPLVAAAERGHLEVVRELLRHLDAEGVAAKNRSGYDALHVAAREGRHAVVQEMLLHNRLLAKTFGPANTSPLISAATRGHTEVVKLLLELDDFGLVEMAKDNGKNSLHFAARQGHVEIVKALLEKDPQLARRNDKKGQTALHMAVKGTNCDVLRALVDADPAIVMLPDKNGNTALHVATRKKRAEIVAVLLRLPDTHVNALTRDHKTAYDIAEALPLCEESSEIKDILSQHGALRSRELNQPRDELRKTVTEIKKDVHTQLEQTRKTNKNVHGIAKELRKLHREGINNATNSVTVVAVLFATVAFAAIFTVPGGNANNGVAVVVQAASFRIFFIFNAIALFTSLAVVVVQITVVRGETKSERKVVEVINKLMWLASVCTTISFIASCYIVLGRHFQWAALLVSLIGGITMAGVLGTMTYYVVKSKRMRKIRKKEKMSRRSGSSSWYDNTELSETELNQVYAL</sequence>
<gene>
    <name evidence="3" type="primary">NPR4</name>
    <name evidence="6" type="ordered locus">Os01g0837000</name>
    <name evidence="4" type="ordered locus">LOC_Os01g61990</name>
    <name evidence="5" type="ORF">P0506B12.37</name>
</gene>
<organism>
    <name type="scientific">Oryza sativa subsp. japonica</name>
    <name type="common">Rice</name>
    <dbReference type="NCBI Taxonomy" id="39947"/>
    <lineage>
        <taxon>Eukaryota</taxon>
        <taxon>Viridiplantae</taxon>
        <taxon>Streptophyta</taxon>
        <taxon>Embryophyta</taxon>
        <taxon>Tracheophyta</taxon>
        <taxon>Spermatophyta</taxon>
        <taxon>Magnoliopsida</taxon>
        <taxon>Liliopsida</taxon>
        <taxon>Poales</taxon>
        <taxon>Poaceae</taxon>
        <taxon>BOP clade</taxon>
        <taxon>Oryzoideae</taxon>
        <taxon>Oryzeae</taxon>
        <taxon>Oryzinae</taxon>
        <taxon>Oryza</taxon>
        <taxon>Oryza sativa</taxon>
    </lineage>
</organism>
<accession>A2CIR5</accession>
<accession>Q0JHX9</accession>
<accession>Q5QMH5</accession>
<evidence type="ECO:0000250" key="1">
    <source>
        <dbReference type="UniProtKB" id="Q9C7A2"/>
    </source>
</evidence>
<evidence type="ECO:0000255" key="2"/>
<evidence type="ECO:0000303" key="3">
    <source>
    </source>
</evidence>
<evidence type="ECO:0000305" key="4"/>
<evidence type="ECO:0000312" key="5">
    <source>
        <dbReference type="EMBL" id="BAD73402.1"/>
    </source>
</evidence>
<evidence type="ECO:0000312" key="6">
    <source>
        <dbReference type="EMBL" id="BAS75114.1"/>
    </source>
</evidence>
<comment type="function">
    <text evidence="1">Involved in salt stress tolerance.</text>
</comment>
<comment type="subcellular location">
    <subcellularLocation>
        <location evidence="1">Cell membrane</location>
        <topology evidence="2">Multi-pass membrane protein</topology>
    </subcellularLocation>
</comment>
<comment type="alternative products">
    <event type="alternative splicing"/>
    <isoform>
        <id>A2CIR5-1</id>
        <name>1</name>
        <sequence type="displayed"/>
    </isoform>
    <isoform>
        <id>A2CIR5-2</id>
        <name>2</name>
        <sequence type="described" ref="VSP_058478"/>
    </isoform>
</comment>
<comment type="sequence caution" evidence="4">
    <conflict type="erroneous gene model prediction">
        <sequence resource="EMBL-CDS" id="BAF06649"/>
    </conflict>
</comment>
<keyword id="KW-0025">Alternative splicing</keyword>
<keyword id="KW-0040">ANK repeat</keyword>
<keyword id="KW-1003">Cell membrane</keyword>
<keyword id="KW-0472">Membrane</keyword>
<keyword id="KW-1185">Reference proteome</keyword>
<keyword id="KW-0677">Repeat</keyword>
<keyword id="KW-0346">Stress response</keyword>
<keyword id="KW-0812">Transmembrane</keyword>
<keyword id="KW-1133">Transmembrane helix</keyword>